<gene>
    <name evidence="1" type="primary">argC</name>
    <name type="ordered locus">Deide_07080</name>
</gene>
<protein>
    <recommendedName>
        <fullName evidence="1">N-acetyl-gamma-glutamyl-phosphate reductase</fullName>
        <shortName evidence="1">AGPR</shortName>
        <ecNumber evidence="1">1.2.1.38</ecNumber>
    </recommendedName>
    <alternativeName>
        <fullName evidence="1">N-acetyl-glutamate semialdehyde dehydrogenase</fullName>
        <shortName evidence="1">NAGSA dehydrogenase</shortName>
    </alternativeName>
</protein>
<accession>C1D141</accession>
<name>ARGC_DEIDV</name>
<evidence type="ECO:0000255" key="1">
    <source>
        <dbReference type="HAMAP-Rule" id="MF_01110"/>
    </source>
</evidence>
<reference key="1">
    <citation type="journal article" date="2009" name="PLoS Genet.">
        <title>Alliance of proteomics and genomics to unravel the specificities of Sahara bacterium Deinococcus deserti.</title>
        <authorList>
            <person name="de Groot A."/>
            <person name="Dulermo R."/>
            <person name="Ortet P."/>
            <person name="Blanchard L."/>
            <person name="Guerin P."/>
            <person name="Fernandez B."/>
            <person name="Vacherie B."/>
            <person name="Dossat C."/>
            <person name="Jolivet E."/>
            <person name="Siguier P."/>
            <person name="Chandler M."/>
            <person name="Barakat M."/>
            <person name="Dedieu A."/>
            <person name="Barbe V."/>
            <person name="Heulin T."/>
            <person name="Sommer S."/>
            <person name="Achouak W."/>
            <person name="Armengaud J."/>
        </authorList>
    </citation>
    <scope>NUCLEOTIDE SEQUENCE [LARGE SCALE GENOMIC DNA]</scope>
    <source>
        <strain>DSM 17065 / CIP 109153 / LMG 22923 / VCD115</strain>
    </source>
</reference>
<organism>
    <name type="scientific">Deinococcus deserti (strain DSM 17065 / CIP 109153 / LMG 22923 / VCD115)</name>
    <dbReference type="NCBI Taxonomy" id="546414"/>
    <lineage>
        <taxon>Bacteria</taxon>
        <taxon>Thermotogati</taxon>
        <taxon>Deinococcota</taxon>
        <taxon>Deinococci</taxon>
        <taxon>Deinococcales</taxon>
        <taxon>Deinococcaceae</taxon>
        <taxon>Deinococcus</taxon>
    </lineage>
</organism>
<comment type="function">
    <text evidence="1">Catalyzes the NADPH-dependent reduction of N-acetyl-5-glutamyl phosphate to yield N-acetyl-L-glutamate 5-semialdehyde.</text>
</comment>
<comment type="catalytic activity">
    <reaction evidence="1">
        <text>N-acetyl-L-glutamate 5-semialdehyde + phosphate + NADP(+) = N-acetyl-L-glutamyl 5-phosphate + NADPH + H(+)</text>
        <dbReference type="Rhea" id="RHEA:21588"/>
        <dbReference type="ChEBI" id="CHEBI:15378"/>
        <dbReference type="ChEBI" id="CHEBI:29123"/>
        <dbReference type="ChEBI" id="CHEBI:43474"/>
        <dbReference type="ChEBI" id="CHEBI:57783"/>
        <dbReference type="ChEBI" id="CHEBI:57936"/>
        <dbReference type="ChEBI" id="CHEBI:58349"/>
        <dbReference type="EC" id="1.2.1.38"/>
    </reaction>
</comment>
<comment type="pathway">
    <text evidence="1">Amino-acid biosynthesis; L-arginine biosynthesis; N(2)-acetyl-L-ornithine from L-glutamate: step 3/4.</text>
</comment>
<comment type="subcellular location">
    <subcellularLocation>
        <location evidence="1">Cytoplasm</location>
    </subcellularLocation>
</comment>
<comment type="similarity">
    <text evidence="1">Belongs to the NAGSA dehydrogenase family. Type 2 subfamily.</text>
</comment>
<dbReference type="EC" id="1.2.1.38" evidence="1"/>
<dbReference type="EMBL" id="CP001114">
    <property type="protein sequence ID" value="ACO45565.1"/>
    <property type="molecule type" value="Genomic_DNA"/>
</dbReference>
<dbReference type="RefSeq" id="WP_012692688.1">
    <property type="nucleotide sequence ID" value="NC_012526.1"/>
</dbReference>
<dbReference type="SMR" id="C1D141"/>
<dbReference type="STRING" id="546414.Deide_07080"/>
<dbReference type="PaxDb" id="546414-Deide_07080"/>
<dbReference type="KEGG" id="ddr:Deide_07080"/>
<dbReference type="eggNOG" id="COG0002">
    <property type="taxonomic scope" value="Bacteria"/>
</dbReference>
<dbReference type="HOGENOM" id="CLU_077118_0_0_0"/>
<dbReference type="OrthoDB" id="9801289at2"/>
<dbReference type="UniPathway" id="UPA00068">
    <property type="reaction ID" value="UER00108"/>
</dbReference>
<dbReference type="Proteomes" id="UP000002208">
    <property type="component" value="Chromosome"/>
</dbReference>
<dbReference type="GO" id="GO:0005737">
    <property type="term" value="C:cytoplasm"/>
    <property type="evidence" value="ECO:0007669"/>
    <property type="project" value="UniProtKB-SubCell"/>
</dbReference>
<dbReference type="GO" id="GO:0003942">
    <property type="term" value="F:N-acetyl-gamma-glutamyl-phosphate reductase activity"/>
    <property type="evidence" value="ECO:0007669"/>
    <property type="project" value="UniProtKB-UniRule"/>
</dbReference>
<dbReference type="GO" id="GO:0051287">
    <property type="term" value="F:NAD binding"/>
    <property type="evidence" value="ECO:0007669"/>
    <property type="project" value="InterPro"/>
</dbReference>
<dbReference type="GO" id="GO:0006526">
    <property type="term" value="P:L-arginine biosynthetic process"/>
    <property type="evidence" value="ECO:0007669"/>
    <property type="project" value="UniProtKB-UniRule"/>
</dbReference>
<dbReference type="CDD" id="cd23935">
    <property type="entry name" value="AGPR_2_C"/>
    <property type="match status" value="1"/>
</dbReference>
<dbReference type="CDD" id="cd17896">
    <property type="entry name" value="AGPR_2_N"/>
    <property type="match status" value="1"/>
</dbReference>
<dbReference type="Gene3D" id="3.30.360.10">
    <property type="entry name" value="Dihydrodipicolinate Reductase, domain 2"/>
    <property type="match status" value="1"/>
</dbReference>
<dbReference type="Gene3D" id="3.40.50.720">
    <property type="entry name" value="NAD(P)-binding Rossmann-like Domain"/>
    <property type="match status" value="1"/>
</dbReference>
<dbReference type="HAMAP" id="MF_01110">
    <property type="entry name" value="ArgC_type2"/>
    <property type="match status" value="1"/>
</dbReference>
<dbReference type="InterPro" id="IPR023013">
    <property type="entry name" value="AGPR_AS"/>
</dbReference>
<dbReference type="InterPro" id="IPR010136">
    <property type="entry name" value="AGPR_type-2"/>
</dbReference>
<dbReference type="InterPro" id="IPR036291">
    <property type="entry name" value="NAD(P)-bd_dom_sf"/>
</dbReference>
<dbReference type="InterPro" id="IPR050085">
    <property type="entry name" value="NAGSA_dehydrogenase"/>
</dbReference>
<dbReference type="InterPro" id="IPR000534">
    <property type="entry name" value="Semialdehyde_DH_NAD-bd"/>
</dbReference>
<dbReference type="NCBIfam" id="TIGR01851">
    <property type="entry name" value="argC_other"/>
    <property type="match status" value="1"/>
</dbReference>
<dbReference type="PANTHER" id="PTHR32338:SF10">
    <property type="entry name" value="N-ACETYL-GAMMA-GLUTAMYL-PHOSPHATE REDUCTASE, CHLOROPLASTIC-RELATED"/>
    <property type="match status" value="1"/>
</dbReference>
<dbReference type="PANTHER" id="PTHR32338">
    <property type="entry name" value="N-ACETYL-GAMMA-GLUTAMYL-PHOSPHATE REDUCTASE, CHLOROPLASTIC-RELATED-RELATED"/>
    <property type="match status" value="1"/>
</dbReference>
<dbReference type="Pfam" id="PF22698">
    <property type="entry name" value="Semialdhyde_dhC_1"/>
    <property type="match status" value="1"/>
</dbReference>
<dbReference type="SMART" id="SM00859">
    <property type="entry name" value="Semialdhyde_dh"/>
    <property type="match status" value="1"/>
</dbReference>
<dbReference type="SUPFAM" id="SSF55347">
    <property type="entry name" value="Glyceraldehyde-3-phosphate dehydrogenase-like, C-terminal domain"/>
    <property type="match status" value="1"/>
</dbReference>
<dbReference type="SUPFAM" id="SSF51735">
    <property type="entry name" value="NAD(P)-binding Rossmann-fold domains"/>
    <property type="match status" value="1"/>
</dbReference>
<dbReference type="PROSITE" id="PS01224">
    <property type="entry name" value="ARGC"/>
    <property type="match status" value="1"/>
</dbReference>
<proteinExistence type="inferred from homology"/>
<keyword id="KW-0028">Amino-acid biosynthesis</keyword>
<keyword id="KW-0055">Arginine biosynthesis</keyword>
<keyword id="KW-0963">Cytoplasm</keyword>
<keyword id="KW-0521">NADP</keyword>
<keyword id="KW-0560">Oxidoreductase</keyword>
<keyword id="KW-1185">Reference proteome</keyword>
<sequence length="308" mass="32657">MTRPRVFIDGEAGTTGLQIRARLSGRTDLELLSIDPARRKDPQARAELLNAANVSILCLHDDAAREAVALTTNPEARLLDASTAHRVHPEWVFGFPELSAQQPDRIRAARYVANPGCYSTGAIALLAPLTAAGLLSADFPVSIQGYSGYTGGGRALVDAHEKGEAHPMRGPFLSYALGLGHKHIPETMRYGGLSRTPIFTPNVGAWAQGMTVTIPLHLSDLGVSAQALHGALTAHYAGQKYVRVAAMESNPEILDPQTLNGTNDLDLFVYASQDGERAVLAARLDNLGKGAGGAAVQNLNLMLGLPDA</sequence>
<feature type="chain" id="PRO_1000213574" description="N-acetyl-gamma-glutamyl-phosphate reductase">
    <location>
        <begin position="1"/>
        <end position="308"/>
    </location>
</feature>
<feature type="active site" evidence="1">
    <location>
        <position position="117"/>
    </location>
</feature>